<comment type="function">
    <text evidence="1">Catalyzes the synthesis of beta-nicotinate D-ribonucleotide from nicotinate and 5-phospho-D-ribose 1-phosphate at the expense of ATP.</text>
</comment>
<comment type="catalytic activity">
    <reaction evidence="1">
        <text>nicotinate + 5-phospho-alpha-D-ribose 1-diphosphate + ATP + H2O = nicotinate beta-D-ribonucleotide + ADP + phosphate + diphosphate</text>
        <dbReference type="Rhea" id="RHEA:36163"/>
        <dbReference type="ChEBI" id="CHEBI:15377"/>
        <dbReference type="ChEBI" id="CHEBI:30616"/>
        <dbReference type="ChEBI" id="CHEBI:32544"/>
        <dbReference type="ChEBI" id="CHEBI:33019"/>
        <dbReference type="ChEBI" id="CHEBI:43474"/>
        <dbReference type="ChEBI" id="CHEBI:57502"/>
        <dbReference type="ChEBI" id="CHEBI:58017"/>
        <dbReference type="ChEBI" id="CHEBI:456216"/>
        <dbReference type="EC" id="6.3.4.21"/>
    </reaction>
</comment>
<comment type="pathway">
    <text evidence="1">Cofactor biosynthesis; NAD(+) biosynthesis; nicotinate D-ribonucleotide from nicotinate: step 1/1.</text>
</comment>
<comment type="PTM">
    <text evidence="1">Transiently phosphorylated on a His residue during the reaction cycle. Phosphorylation strongly increases the affinity for substrates and increases the rate of nicotinate D-ribonucleotide production. Dephosphorylation regenerates the low-affinity form of the enzyme, leading to product release.</text>
</comment>
<comment type="similarity">
    <text evidence="1">Belongs to the NAPRTase family.</text>
</comment>
<gene>
    <name evidence="1" type="primary">pncB</name>
    <name type="ordered locus">BB3780</name>
</gene>
<dbReference type="EC" id="6.3.4.21" evidence="1"/>
<dbReference type="EMBL" id="BX640448">
    <property type="protein sequence ID" value="CAE35754.1"/>
    <property type="molecule type" value="Genomic_DNA"/>
</dbReference>
<dbReference type="SMR" id="Q7WCZ8"/>
<dbReference type="KEGG" id="bbr:BB3780"/>
<dbReference type="eggNOG" id="COG1488">
    <property type="taxonomic scope" value="Bacteria"/>
</dbReference>
<dbReference type="HOGENOM" id="CLU_030991_1_0_4"/>
<dbReference type="UniPathway" id="UPA00253">
    <property type="reaction ID" value="UER00457"/>
</dbReference>
<dbReference type="Proteomes" id="UP000001027">
    <property type="component" value="Chromosome"/>
</dbReference>
<dbReference type="GO" id="GO:0005829">
    <property type="term" value="C:cytosol"/>
    <property type="evidence" value="ECO:0007669"/>
    <property type="project" value="TreeGrafter"/>
</dbReference>
<dbReference type="GO" id="GO:0004516">
    <property type="term" value="F:nicotinate phosphoribosyltransferase activity"/>
    <property type="evidence" value="ECO:0007669"/>
    <property type="project" value="UniProtKB-UniRule"/>
</dbReference>
<dbReference type="GO" id="GO:0034355">
    <property type="term" value="P:NAD biosynthetic process via the salvage pathway"/>
    <property type="evidence" value="ECO:0007669"/>
    <property type="project" value="TreeGrafter"/>
</dbReference>
<dbReference type="CDD" id="cd01401">
    <property type="entry name" value="PncB_like"/>
    <property type="match status" value="1"/>
</dbReference>
<dbReference type="Gene3D" id="3.20.140.10">
    <property type="entry name" value="nicotinate phosphoribosyltransferase"/>
    <property type="match status" value="1"/>
</dbReference>
<dbReference type="HAMAP" id="MF_00570">
    <property type="entry name" value="NAPRTase"/>
    <property type="match status" value="1"/>
</dbReference>
<dbReference type="InterPro" id="IPR041525">
    <property type="entry name" value="N/Namide_PRibTrfase"/>
</dbReference>
<dbReference type="InterPro" id="IPR040727">
    <property type="entry name" value="NAPRTase_N"/>
</dbReference>
<dbReference type="InterPro" id="IPR006406">
    <property type="entry name" value="Nic_PRibTrfase"/>
</dbReference>
<dbReference type="InterPro" id="IPR007229">
    <property type="entry name" value="Nic_PRibTrfase-Fam"/>
</dbReference>
<dbReference type="InterPro" id="IPR036068">
    <property type="entry name" value="Nicotinate_pribotase-like_C"/>
</dbReference>
<dbReference type="NCBIfam" id="TIGR01514">
    <property type="entry name" value="NAPRTase"/>
    <property type="match status" value="1"/>
</dbReference>
<dbReference type="NCBIfam" id="NF003704">
    <property type="entry name" value="PRK05321.1"/>
    <property type="match status" value="1"/>
</dbReference>
<dbReference type="PANTHER" id="PTHR11098">
    <property type="entry name" value="NICOTINATE PHOSPHORIBOSYLTRANSFERASE"/>
    <property type="match status" value="1"/>
</dbReference>
<dbReference type="PANTHER" id="PTHR11098:SF1">
    <property type="entry name" value="NICOTINATE PHOSPHORIBOSYLTRANSFERASE"/>
    <property type="match status" value="1"/>
</dbReference>
<dbReference type="Pfam" id="PF04095">
    <property type="entry name" value="NAPRTase"/>
    <property type="match status" value="1"/>
</dbReference>
<dbReference type="Pfam" id="PF17767">
    <property type="entry name" value="NAPRTase_N"/>
    <property type="match status" value="1"/>
</dbReference>
<dbReference type="PIRSF" id="PIRSF000484">
    <property type="entry name" value="NAPRT"/>
    <property type="match status" value="1"/>
</dbReference>
<dbReference type="SUPFAM" id="SSF51690">
    <property type="entry name" value="Nicotinate/Quinolinate PRTase C-terminal domain-like"/>
    <property type="match status" value="1"/>
</dbReference>
<dbReference type="SUPFAM" id="SSF54675">
    <property type="entry name" value="Nicotinate/Quinolinate PRTase N-terminal domain-like"/>
    <property type="match status" value="1"/>
</dbReference>
<protein>
    <recommendedName>
        <fullName evidence="1">Nicotinate phosphoribosyltransferase</fullName>
        <shortName evidence="1">NAPRTase</shortName>
        <ecNumber evidence="1">6.3.4.21</ecNumber>
    </recommendedName>
</protein>
<accession>Q7WCZ8</accession>
<evidence type="ECO:0000255" key="1">
    <source>
        <dbReference type="HAMAP-Rule" id="MF_00570"/>
    </source>
</evidence>
<proteinExistence type="inferred from homology"/>
<sequence length="405" mass="46627">MVCRNVSRQQFRAIMIITSLLDTDLYKFSMMQVVLHHFPAAQVEYRYKCRTPGINLRPYLDEIRAEVHELCQLRFTSEELDYLRGLRFIKSDFVDFLGLFHLPERCIFIGEGEQPGEISITVKGPWLHTILFEIPVLAIVNEVYFRNTRRNPDWEEGRKRLQSKMNLVLDDPALADFRVAEYGTRRRFSKVWHEEIVSTMKARMGVHFAGTSNVLLAMRHGVLPLGTMGHEYLQACQALGPRLRDSQVFALEVWAKEYRGDLGIALSDVYGMDAFLRDFDMYFCKLFDGARHDSGDPFVWGERLLEHYRANRADPRAKTLVFSDSLTFPRAIELARQFAGRCKVSFGIGTNLTNDLGHEPLQIVMKMVRCNGQPVAKVSDAPEKTMCDDPAYLAYLRQVFQLPPA</sequence>
<keyword id="KW-0436">Ligase</keyword>
<keyword id="KW-0597">Phosphoprotein</keyword>
<keyword id="KW-0662">Pyridine nucleotide biosynthesis</keyword>
<organism>
    <name type="scientific">Bordetella bronchiseptica (strain ATCC BAA-588 / NCTC 13252 / RB50)</name>
    <name type="common">Alcaligenes bronchisepticus</name>
    <dbReference type="NCBI Taxonomy" id="257310"/>
    <lineage>
        <taxon>Bacteria</taxon>
        <taxon>Pseudomonadati</taxon>
        <taxon>Pseudomonadota</taxon>
        <taxon>Betaproteobacteria</taxon>
        <taxon>Burkholderiales</taxon>
        <taxon>Alcaligenaceae</taxon>
        <taxon>Bordetella</taxon>
    </lineage>
</organism>
<reference key="1">
    <citation type="journal article" date="2003" name="Nat. Genet.">
        <title>Comparative analysis of the genome sequences of Bordetella pertussis, Bordetella parapertussis and Bordetella bronchiseptica.</title>
        <authorList>
            <person name="Parkhill J."/>
            <person name="Sebaihia M."/>
            <person name="Preston A."/>
            <person name="Murphy L.D."/>
            <person name="Thomson N.R."/>
            <person name="Harris D.E."/>
            <person name="Holden M.T.G."/>
            <person name="Churcher C.M."/>
            <person name="Bentley S.D."/>
            <person name="Mungall K.L."/>
            <person name="Cerdeno-Tarraga A.-M."/>
            <person name="Temple L."/>
            <person name="James K.D."/>
            <person name="Harris B."/>
            <person name="Quail M.A."/>
            <person name="Achtman M."/>
            <person name="Atkin R."/>
            <person name="Baker S."/>
            <person name="Basham D."/>
            <person name="Bason N."/>
            <person name="Cherevach I."/>
            <person name="Chillingworth T."/>
            <person name="Collins M."/>
            <person name="Cronin A."/>
            <person name="Davis P."/>
            <person name="Doggett J."/>
            <person name="Feltwell T."/>
            <person name="Goble A."/>
            <person name="Hamlin N."/>
            <person name="Hauser H."/>
            <person name="Holroyd S."/>
            <person name="Jagels K."/>
            <person name="Leather S."/>
            <person name="Moule S."/>
            <person name="Norberczak H."/>
            <person name="O'Neil S."/>
            <person name="Ormond D."/>
            <person name="Price C."/>
            <person name="Rabbinowitsch E."/>
            <person name="Rutter S."/>
            <person name="Sanders M."/>
            <person name="Saunders D."/>
            <person name="Seeger K."/>
            <person name="Sharp S."/>
            <person name="Simmonds M."/>
            <person name="Skelton J."/>
            <person name="Squares R."/>
            <person name="Squares S."/>
            <person name="Stevens K."/>
            <person name="Unwin L."/>
            <person name="Whitehead S."/>
            <person name="Barrell B.G."/>
            <person name="Maskell D.J."/>
        </authorList>
    </citation>
    <scope>NUCLEOTIDE SEQUENCE [LARGE SCALE GENOMIC DNA]</scope>
    <source>
        <strain>ATCC BAA-588 / NCTC 13252 / RB50</strain>
    </source>
</reference>
<name>PNCB_BORBR</name>
<feature type="chain" id="PRO_0000205818" description="Nicotinate phosphoribosyltransferase">
    <location>
        <begin position="1"/>
        <end position="405"/>
    </location>
</feature>
<feature type="modified residue" description="Phosphohistidine; by autocatalysis" evidence="1">
    <location>
        <position position="230"/>
    </location>
</feature>